<reference key="1">
    <citation type="journal article" date="2005" name="Proc. Natl. Acad. Sci. U.S.A.">
        <title>Whole genome sequence of Staphylococcus saprophyticus reveals the pathogenesis of uncomplicated urinary tract infection.</title>
        <authorList>
            <person name="Kuroda M."/>
            <person name="Yamashita A."/>
            <person name="Hirakawa H."/>
            <person name="Kumano M."/>
            <person name="Morikawa K."/>
            <person name="Higashide M."/>
            <person name="Maruyama A."/>
            <person name="Inose Y."/>
            <person name="Matoba K."/>
            <person name="Toh H."/>
            <person name="Kuhara S."/>
            <person name="Hattori M."/>
            <person name="Ohta T."/>
        </authorList>
    </citation>
    <scope>NUCLEOTIDE SEQUENCE [LARGE SCALE GENOMIC DNA]</scope>
    <source>
        <strain>ATCC 15305 / DSM 20229 / NCIMB 8711 / NCTC 7292 / S-41</strain>
    </source>
</reference>
<feature type="chain" id="PRO_0000212285" description="Adapter protein MecA">
    <location>
        <begin position="1"/>
        <end position="238"/>
    </location>
</feature>
<feature type="region of interest" description="Disordered" evidence="2">
    <location>
        <begin position="120"/>
        <end position="139"/>
    </location>
</feature>
<feature type="compositionally biased region" description="Basic and acidic residues" evidence="2">
    <location>
        <begin position="120"/>
        <end position="136"/>
    </location>
</feature>
<evidence type="ECO:0000255" key="1">
    <source>
        <dbReference type="HAMAP-Rule" id="MF_01124"/>
    </source>
</evidence>
<evidence type="ECO:0000256" key="2">
    <source>
        <dbReference type="SAM" id="MobiDB-lite"/>
    </source>
</evidence>
<protein>
    <recommendedName>
        <fullName evidence="1">Adapter protein MecA</fullName>
    </recommendedName>
</protein>
<comment type="function">
    <text evidence="1">Enables the recognition and targeting of unfolded and aggregated proteins to the ClpC protease or to other proteins involved in proteolysis.</text>
</comment>
<comment type="subunit">
    <text evidence="1">Homodimer.</text>
</comment>
<comment type="domain">
    <text>The N-terminal domain probably binds unfolded/aggregated proteins; the C-terminal domain interacts with ClpC.</text>
</comment>
<comment type="similarity">
    <text evidence="1">Belongs to the MecA family.</text>
</comment>
<gene>
    <name evidence="1" type="primary">mecA</name>
    <name type="ordered locus">SSP1787</name>
</gene>
<proteinExistence type="inferred from homology"/>
<name>MECA_STAS1</name>
<accession>Q49WC7</accession>
<dbReference type="EMBL" id="AP008934">
    <property type="protein sequence ID" value="BAE18932.1"/>
    <property type="molecule type" value="Genomic_DNA"/>
</dbReference>
<dbReference type="RefSeq" id="WP_011303487.1">
    <property type="nucleotide sequence ID" value="NZ_MTGA01000039.1"/>
</dbReference>
<dbReference type="SMR" id="Q49WC7"/>
<dbReference type="GeneID" id="3615414"/>
<dbReference type="KEGG" id="ssp:SSP1787"/>
<dbReference type="PATRIC" id="fig|342451.11.peg.1783"/>
<dbReference type="eggNOG" id="COG4862">
    <property type="taxonomic scope" value="Bacteria"/>
</dbReference>
<dbReference type="HOGENOM" id="CLU_071496_2_1_9"/>
<dbReference type="OrthoDB" id="2360201at2"/>
<dbReference type="Proteomes" id="UP000006371">
    <property type="component" value="Chromosome"/>
</dbReference>
<dbReference type="GO" id="GO:0030674">
    <property type="term" value="F:protein-macromolecule adaptor activity"/>
    <property type="evidence" value="ECO:0007669"/>
    <property type="project" value="UniProtKB-UniRule"/>
</dbReference>
<dbReference type="Gene3D" id="3.30.70.1950">
    <property type="match status" value="1"/>
</dbReference>
<dbReference type="HAMAP" id="MF_01124">
    <property type="entry name" value="MecA"/>
    <property type="match status" value="1"/>
</dbReference>
<dbReference type="InterPro" id="IPR038471">
    <property type="entry name" value="MecA_C_sf"/>
</dbReference>
<dbReference type="InterPro" id="IPR008681">
    <property type="entry name" value="Neg-reg_MecA"/>
</dbReference>
<dbReference type="NCBIfam" id="NF002642">
    <property type="entry name" value="PRK02315.1-3"/>
    <property type="match status" value="1"/>
</dbReference>
<dbReference type="NCBIfam" id="NF002644">
    <property type="entry name" value="PRK02315.1-5"/>
    <property type="match status" value="1"/>
</dbReference>
<dbReference type="PANTHER" id="PTHR39161">
    <property type="entry name" value="ADAPTER PROTEIN MECA"/>
    <property type="match status" value="1"/>
</dbReference>
<dbReference type="PANTHER" id="PTHR39161:SF1">
    <property type="entry name" value="ADAPTER PROTEIN MECA 1"/>
    <property type="match status" value="1"/>
</dbReference>
<dbReference type="Pfam" id="PF05389">
    <property type="entry name" value="MecA"/>
    <property type="match status" value="1"/>
</dbReference>
<dbReference type="PIRSF" id="PIRSF029008">
    <property type="entry name" value="MecA"/>
    <property type="match status" value="1"/>
</dbReference>
<sequence length="238" mass="28583">MRIERVDDTTVKLFITYSDIEARGFKREDLWTNRKRGEEFFWNMMEEINEEEDFVVEGPLWIQVHAFEKGVEVTISKSKNEDLINMSDEDNEQLDYQVNDLLSQTFDQDDSLEDLFDQRQQQKDNKQNQDQNERNRQNTRTVIVKFNDLEEVIEYAHYNNQVTDEFEDLLYSLNNVYYYAVHYDETVDQETINDSYSQLLEFAYPTDKSEVYLNDYAKIIMSHNVASQVRRYFPNTEA</sequence>
<organism>
    <name type="scientific">Staphylococcus saprophyticus subsp. saprophyticus (strain ATCC 15305 / DSM 20229 / NCIMB 8711 / NCTC 7292 / S-41)</name>
    <dbReference type="NCBI Taxonomy" id="342451"/>
    <lineage>
        <taxon>Bacteria</taxon>
        <taxon>Bacillati</taxon>
        <taxon>Bacillota</taxon>
        <taxon>Bacilli</taxon>
        <taxon>Bacillales</taxon>
        <taxon>Staphylococcaceae</taxon>
        <taxon>Staphylococcus</taxon>
    </lineage>
</organism>
<keyword id="KW-1185">Reference proteome</keyword>